<proteinExistence type="evidence at protein level"/>
<comment type="function">
    <text evidence="2">Transcriptional regulator required for Agrobacterium-mediated stable genetic transformation by T-DNA integration in host genome, but not for T-DNA transient expression.</text>
</comment>
<comment type="subunit">
    <text evidence="2">Interacts with Agrobacterium tumefaciens VirE2. Binds to VIP1. Forms a complex made of Agrobacterium VirE2, VIP1, VIP2 and single-stranded DNA (ssDNA).</text>
</comment>
<comment type="subcellular location">
    <subcellularLocation>
        <location evidence="2">Nucleus</location>
    </subcellularLocation>
</comment>
<comment type="disruption phenotype">
    <text evidence="2">Impaired stable genetic transformation by Agrobacterium T-DNA.</text>
</comment>
<comment type="similarity">
    <text evidence="3">Belongs to the CNOT2/3/5 family.</text>
</comment>
<comment type="sequence caution" evidence="3">
    <conflict type="erroneous initiation">
        <sequence resource="EMBL-CDS" id="AAG44978"/>
    </conflict>
    <text>Truncated N-terminus.</text>
</comment>
<comment type="sequence caution" evidence="3">
    <conflict type="miscellaneous discrepancy">
        <sequence resource="EMBL-CDS" id="BAC41906"/>
    </conflict>
    <text>Intron retention.</text>
</comment>
<accession>Q9FPW4</accession>
<accession>Q8GZ37</accession>
<gene>
    <name type="primary">VIP2</name>
    <name type="ordered locus">At5g59710</name>
    <name type="ORF">MTH12.8</name>
</gene>
<name>VIP2_ARATH</name>
<evidence type="ECO:0000256" key="1">
    <source>
        <dbReference type="SAM" id="MobiDB-lite"/>
    </source>
</evidence>
<evidence type="ECO:0000269" key="2">
    <source>
    </source>
</evidence>
<evidence type="ECO:0000305" key="3"/>
<organism>
    <name type="scientific">Arabidopsis thaliana</name>
    <name type="common">Mouse-ear cress</name>
    <dbReference type="NCBI Taxonomy" id="3702"/>
    <lineage>
        <taxon>Eukaryota</taxon>
        <taxon>Viridiplantae</taxon>
        <taxon>Streptophyta</taxon>
        <taxon>Embryophyta</taxon>
        <taxon>Tracheophyta</taxon>
        <taxon>Spermatophyta</taxon>
        <taxon>Magnoliopsida</taxon>
        <taxon>eudicotyledons</taxon>
        <taxon>Gunneridae</taxon>
        <taxon>Pentapetalae</taxon>
        <taxon>rosids</taxon>
        <taxon>malvids</taxon>
        <taxon>Brassicales</taxon>
        <taxon>Brassicaceae</taxon>
        <taxon>Camelineae</taxon>
        <taxon>Arabidopsis</taxon>
    </lineage>
</organism>
<keyword id="KW-0192">Crown gall tumor</keyword>
<keyword id="KW-0539">Nucleus</keyword>
<keyword id="KW-1185">Reference proteome</keyword>
<keyword id="KW-0804">Transcription</keyword>
<keyword id="KW-0805">Transcription regulation</keyword>
<sequence>MSNLHSSLNGSASNLPDGSGRSFTASYSGQSGAPSPSFHHTGNLQGLHNIHGNYNVGNMQGTLTSRNSSMNSIPSAGVQQPNGSFSSGRFASNNLPVNLSQLSHGSSHGHSGIPNRGLNVVGNPGFSSNANGVGGSIPGILSTSAGLSNRNSVPGMGISQLLGNSGPRITNSMGNMVGGGNLGRNISSGGLSIPGLSSRLNLAANSGSGLNVQGQNRMMGGVLPQGSQVMSMLGNSYHTGGGPLSQNHVQSVNNMMLSDHPNDSSLFDINNDFPQLTSRPGSAGGTQGHLGSLRKQGLGVPLVQQNQEFSIQNEDFPALPGYKGGNSEYPMDLHQKEQLHDNAMSMMHSQNFSMGRSGGFNLGATYSSHRPQQQPQHTSSTGGLQGLGLRPLSSPNAVSSIGYDQLIQQYQQHQNQSQFPVQQMSSINQFRDSEMKSTQSEADPFCLLGLLDVLNRSNPELTSLALGIDLTTLGLDLNSTGNLYKTFASPWTNEPAKSEVEFTVPNCYYATEPPPLTRASFKRFSYELLFYTFYSMPKDEAQLYAADELYERGWFYHKELRVWFFRVGEPLVRAATYERGTYEYLDPNSFKTVRKEHFVIKYELMEKRPSLLQL</sequence>
<protein>
    <recommendedName>
        <fullName>Probable NOT transcription complex subunit VIP2</fullName>
    </recommendedName>
    <alternativeName>
        <fullName>Protein VIRE2 INTERACTING PROTEIN2</fullName>
        <shortName>AtVIP2</shortName>
    </alternativeName>
</protein>
<feature type="chain" id="PRO_0000405594" description="Probable NOT transcription complex subunit VIP2">
    <location>
        <begin position="1"/>
        <end position="614"/>
    </location>
</feature>
<feature type="region of interest" description="Disordered" evidence="1">
    <location>
        <begin position="1"/>
        <end position="46"/>
    </location>
</feature>
<feature type="region of interest" description="Disordered" evidence="1">
    <location>
        <begin position="58"/>
        <end position="89"/>
    </location>
</feature>
<feature type="region of interest" description="Disordered" evidence="1">
    <location>
        <begin position="361"/>
        <end position="391"/>
    </location>
</feature>
<feature type="compositionally biased region" description="Polar residues" evidence="1">
    <location>
        <begin position="364"/>
        <end position="381"/>
    </location>
</feature>
<feature type="sequence conflict" description="In Ref. 3; BAC41906." evidence="3" ref="3">
    <original>I</original>
    <variation>V</variation>
    <location>
        <position position="50"/>
    </location>
</feature>
<feature type="sequence conflict" description="In Ref. 3; BAC41906." evidence="3" ref="3">
    <original>I</original>
    <variation>V</variation>
    <location>
        <position position="193"/>
    </location>
</feature>
<dbReference type="EMBL" id="AB006705">
    <property type="status" value="NOT_ANNOTATED_CDS"/>
    <property type="molecule type" value="Genomic_DNA"/>
</dbReference>
<dbReference type="EMBL" id="CP002688">
    <property type="protein sequence ID" value="AED97222.1"/>
    <property type="molecule type" value="Genomic_DNA"/>
</dbReference>
<dbReference type="EMBL" id="CP002688">
    <property type="protein sequence ID" value="ANM68181.1"/>
    <property type="molecule type" value="Genomic_DNA"/>
</dbReference>
<dbReference type="EMBL" id="AK117230">
    <property type="protein sequence ID" value="BAC41906.1"/>
    <property type="status" value="ALT_SEQ"/>
    <property type="molecule type" value="mRNA"/>
</dbReference>
<dbReference type="EMBL" id="AF295433">
    <property type="protein sequence ID" value="AAG44978.1"/>
    <property type="status" value="ALT_INIT"/>
    <property type="molecule type" value="mRNA"/>
</dbReference>
<dbReference type="RefSeq" id="NP_001329954.1">
    <property type="nucleotide sequence ID" value="NM_001345367.1"/>
</dbReference>
<dbReference type="RefSeq" id="NP_568912.2">
    <property type="nucleotide sequence ID" value="NM_125363.3"/>
</dbReference>
<dbReference type="SMR" id="Q9FPW4"/>
<dbReference type="BioGRID" id="21336">
    <property type="interactions" value="4"/>
</dbReference>
<dbReference type="FunCoup" id="Q9FPW4">
    <property type="interactions" value="4139"/>
</dbReference>
<dbReference type="STRING" id="3702.Q9FPW4"/>
<dbReference type="GlyGen" id="Q9FPW4">
    <property type="glycosylation" value="4 sites, 1 O-linked glycan (4 sites)"/>
</dbReference>
<dbReference type="iPTMnet" id="Q9FPW4"/>
<dbReference type="PaxDb" id="3702-AT5G59710.1"/>
<dbReference type="ProteomicsDB" id="234239"/>
<dbReference type="EnsemblPlants" id="AT5G59710.1">
    <property type="protein sequence ID" value="AT5G59710.1"/>
    <property type="gene ID" value="AT5G59710"/>
</dbReference>
<dbReference type="EnsemblPlants" id="AT5G59710.2">
    <property type="protein sequence ID" value="AT5G59710.2"/>
    <property type="gene ID" value="AT5G59710"/>
</dbReference>
<dbReference type="GeneID" id="836092"/>
<dbReference type="Gramene" id="AT5G59710.1">
    <property type="protein sequence ID" value="AT5G59710.1"/>
    <property type="gene ID" value="AT5G59710"/>
</dbReference>
<dbReference type="Gramene" id="AT5G59710.2">
    <property type="protein sequence ID" value="AT5G59710.2"/>
    <property type="gene ID" value="AT5G59710"/>
</dbReference>
<dbReference type="KEGG" id="ath:AT5G59710"/>
<dbReference type="Araport" id="AT5G59710"/>
<dbReference type="TAIR" id="AT5G59710">
    <property type="gene designation" value="VIP2"/>
</dbReference>
<dbReference type="eggNOG" id="KOG2151">
    <property type="taxonomic scope" value="Eukaryota"/>
</dbReference>
<dbReference type="HOGENOM" id="CLU_016147_2_0_1"/>
<dbReference type="InParanoid" id="Q9FPW4"/>
<dbReference type="OMA" id="DYHDESL"/>
<dbReference type="OrthoDB" id="25391at2759"/>
<dbReference type="PhylomeDB" id="Q9FPW4"/>
<dbReference type="CD-CODE" id="60F64496">
    <property type="entry name" value="P-body"/>
</dbReference>
<dbReference type="PRO" id="PR:Q9FPW4"/>
<dbReference type="Proteomes" id="UP000006548">
    <property type="component" value="Chromosome 5"/>
</dbReference>
<dbReference type="ExpressionAtlas" id="Q9FPW4">
    <property type="expression patterns" value="baseline and differential"/>
</dbReference>
<dbReference type="GO" id="GO:0030015">
    <property type="term" value="C:CCR4-NOT core complex"/>
    <property type="evidence" value="ECO:0007669"/>
    <property type="project" value="InterPro"/>
</dbReference>
<dbReference type="GO" id="GO:0005634">
    <property type="term" value="C:nucleus"/>
    <property type="evidence" value="ECO:0000314"/>
    <property type="project" value="TAIR"/>
</dbReference>
<dbReference type="GO" id="GO:0003729">
    <property type="term" value="F:mRNA binding"/>
    <property type="evidence" value="ECO:0007005"/>
    <property type="project" value="TAIR"/>
</dbReference>
<dbReference type="GO" id="GO:0015074">
    <property type="term" value="P:DNA integration"/>
    <property type="evidence" value="ECO:0000315"/>
    <property type="project" value="TAIR"/>
</dbReference>
<dbReference type="GO" id="GO:0006355">
    <property type="term" value="P:regulation of DNA-templated transcription"/>
    <property type="evidence" value="ECO:0000270"/>
    <property type="project" value="UniProtKB"/>
</dbReference>
<dbReference type="Gene3D" id="2.30.30.1020">
    <property type="entry name" value="CCR4-NOT complex subunit 2/3/5, C-terminal domain"/>
    <property type="match status" value="1"/>
</dbReference>
<dbReference type="InterPro" id="IPR038635">
    <property type="entry name" value="CCR4-NOT_su2/3/5_C_sf"/>
</dbReference>
<dbReference type="InterPro" id="IPR040168">
    <property type="entry name" value="Not2/3/5"/>
</dbReference>
<dbReference type="InterPro" id="IPR007282">
    <property type="entry name" value="NOT2/3/5_C"/>
</dbReference>
<dbReference type="PANTHER" id="PTHR23326">
    <property type="entry name" value="CCR4 NOT-RELATED"/>
    <property type="match status" value="1"/>
</dbReference>
<dbReference type="Pfam" id="PF04153">
    <property type="entry name" value="NOT2_3_5_C"/>
    <property type="match status" value="1"/>
</dbReference>
<reference key="1">
    <citation type="journal article" date="1997" name="DNA Res.">
        <title>Structural analysis of Arabidopsis thaliana chromosome 5. II. Sequence features of the regions of 1,044,062 bp covered by thirteen physically assigned P1 clones.</title>
        <authorList>
            <person name="Kotani H."/>
            <person name="Nakamura Y."/>
            <person name="Sato S."/>
            <person name="Kaneko T."/>
            <person name="Asamizu E."/>
            <person name="Miyajima N."/>
            <person name="Tabata S."/>
        </authorList>
    </citation>
    <scope>NUCLEOTIDE SEQUENCE [LARGE SCALE GENOMIC DNA]</scope>
    <source>
        <strain>cv. Columbia</strain>
    </source>
</reference>
<reference key="2">
    <citation type="journal article" date="2017" name="Plant J.">
        <title>Araport11: a complete reannotation of the Arabidopsis thaliana reference genome.</title>
        <authorList>
            <person name="Cheng C.Y."/>
            <person name="Krishnakumar V."/>
            <person name="Chan A.P."/>
            <person name="Thibaud-Nissen F."/>
            <person name="Schobel S."/>
            <person name="Town C.D."/>
        </authorList>
    </citation>
    <scope>GENOME REANNOTATION</scope>
    <source>
        <strain>cv. Columbia</strain>
    </source>
</reference>
<reference key="3">
    <citation type="journal article" date="2002" name="Science">
        <title>Functional annotation of a full-length Arabidopsis cDNA collection.</title>
        <authorList>
            <person name="Seki M."/>
            <person name="Narusaka M."/>
            <person name="Kamiya A."/>
            <person name="Ishida J."/>
            <person name="Satou M."/>
            <person name="Sakurai T."/>
            <person name="Nakajima M."/>
            <person name="Enju A."/>
            <person name="Akiyama K."/>
            <person name="Oono Y."/>
            <person name="Muramatsu M."/>
            <person name="Hayashizaki Y."/>
            <person name="Kawai J."/>
            <person name="Carninci P."/>
            <person name="Itoh M."/>
            <person name="Ishii Y."/>
            <person name="Arakawa T."/>
            <person name="Shibata K."/>
            <person name="Shinagawa A."/>
            <person name="Shinozaki K."/>
        </authorList>
    </citation>
    <scope>NUCLEOTIDE SEQUENCE [LARGE SCALE MRNA]</scope>
    <source>
        <strain>cv. Columbia</strain>
    </source>
</reference>
<reference key="4">
    <citation type="journal article" date="2007" name="Plant Cell">
        <title>Arabidopsis VIRE2 INTERACTING PROTEIN2 is required for Agrobacterium T-DNA integration in plants.</title>
        <authorList>
            <person name="Anand A."/>
            <person name="Krichevsky A."/>
            <person name="Schornack S."/>
            <person name="Lahaye T."/>
            <person name="Tzfira T."/>
            <person name="Tang Y."/>
            <person name="Citovsky V."/>
            <person name="Mysore K.S."/>
        </authorList>
    </citation>
    <scope>NUCLEOTIDE SEQUENCE [MRNA] OF 24-614</scope>
    <scope>FUNCTION</scope>
    <scope>DISRUPTION PHENOTYPE</scope>
    <scope>INTERACTION WITH AGROBACTERIUM VIRE2 AND VIP1</scope>
    <scope>SUBCELLULAR LOCATION</scope>
    <source>
        <strain>cv. Columbia</strain>
    </source>
</reference>